<name>QUEC_HAEI8</name>
<evidence type="ECO:0000255" key="1">
    <source>
        <dbReference type="HAMAP-Rule" id="MF_01633"/>
    </source>
</evidence>
<dbReference type="EC" id="6.3.4.20" evidence="1"/>
<dbReference type="EMBL" id="CP000057">
    <property type="protein sequence ID" value="AAX88189.1"/>
    <property type="molecule type" value="Genomic_DNA"/>
</dbReference>
<dbReference type="RefSeq" id="WP_011272434.1">
    <property type="nucleotide sequence ID" value="NC_007146.2"/>
</dbReference>
<dbReference type="SMR" id="Q4QLA8"/>
<dbReference type="GeneID" id="93220194"/>
<dbReference type="KEGG" id="hit:NTHI1362"/>
<dbReference type="HOGENOM" id="CLU_081854_0_0_6"/>
<dbReference type="UniPathway" id="UPA00391"/>
<dbReference type="Proteomes" id="UP000002525">
    <property type="component" value="Chromosome"/>
</dbReference>
<dbReference type="GO" id="GO:0005524">
    <property type="term" value="F:ATP binding"/>
    <property type="evidence" value="ECO:0007669"/>
    <property type="project" value="UniProtKB-UniRule"/>
</dbReference>
<dbReference type="GO" id="GO:0016879">
    <property type="term" value="F:ligase activity, forming carbon-nitrogen bonds"/>
    <property type="evidence" value="ECO:0007669"/>
    <property type="project" value="UniProtKB-UniRule"/>
</dbReference>
<dbReference type="GO" id="GO:0008270">
    <property type="term" value="F:zinc ion binding"/>
    <property type="evidence" value="ECO:0007669"/>
    <property type="project" value="UniProtKB-UniRule"/>
</dbReference>
<dbReference type="GO" id="GO:0008616">
    <property type="term" value="P:queuosine biosynthetic process"/>
    <property type="evidence" value="ECO:0007669"/>
    <property type="project" value="UniProtKB-UniRule"/>
</dbReference>
<dbReference type="CDD" id="cd01995">
    <property type="entry name" value="QueC-like"/>
    <property type="match status" value="1"/>
</dbReference>
<dbReference type="FunFam" id="3.40.50.620:FF:000017">
    <property type="entry name" value="7-cyano-7-deazaguanine synthase"/>
    <property type="match status" value="1"/>
</dbReference>
<dbReference type="Gene3D" id="3.40.50.620">
    <property type="entry name" value="HUPs"/>
    <property type="match status" value="1"/>
</dbReference>
<dbReference type="HAMAP" id="MF_01633">
    <property type="entry name" value="QueC"/>
    <property type="match status" value="1"/>
</dbReference>
<dbReference type="InterPro" id="IPR018317">
    <property type="entry name" value="QueC"/>
</dbReference>
<dbReference type="InterPro" id="IPR014729">
    <property type="entry name" value="Rossmann-like_a/b/a_fold"/>
</dbReference>
<dbReference type="NCBIfam" id="TIGR00364">
    <property type="entry name" value="7-cyano-7-deazaguanine synthase QueC"/>
    <property type="match status" value="1"/>
</dbReference>
<dbReference type="PANTHER" id="PTHR42914">
    <property type="entry name" value="7-CYANO-7-DEAZAGUANINE SYNTHASE"/>
    <property type="match status" value="1"/>
</dbReference>
<dbReference type="PANTHER" id="PTHR42914:SF1">
    <property type="entry name" value="7-CYANO-7-DEAZAGUANINE SYNTHASE"/>
    <property type="match status" value="1"/>
</dbReference>
<dbReference type="Pfam" id="PF06508">
    <property type="entry name" value="QueC"/>
    <property type="match status" value="1"/>
</dbReference>
<dbReference type="PIRSF" id="PIRSF006293">
    <property type="entry name" value="ExsB"/>
    <property type="match status" value="1"/>
</dbReference>
<dbReference type="SUPFAM" id="SSF52402">
    <property type="entry name" value="Adenine nucleotide alpha hydrolases-like"/>
    <property type="match status" value="1"/>
</dbReference>
<organism>
    <name type="scientific">Haemophilus influenzae (strain 86-028NP)</name>
    <dbReference type="NCBI Taxonomy" id="281310"/>
    <lineage>
        <taxon>Bacteria</taxon>
        <taxon>Pseudomonadati</taxon>
        <taxon>Pseudomonadota</taxon>
        <taxon>Gammaproteobacteria</taxon>
        <taxon>Pasteurellales</taxon>
        <taxon>Pasteurellaceae</taxon>
        <taxon>Haemophilus</taxon>
    </lineage>
</organism>
<gene>
    <name evidence="1" type="primary">queC</name>
    <name type="ordered locus">NTHI1362</name>
</gene>
<protein>
    <recommendedName>
        <fullName evidence="1">7-cyano-7-deazaguanine synthase</fullName>
        <ecNumber evidence="1">6.3.4.20</ecNumber>
    </recommendedName>
    <alternativeName>
        <fullName evidence="1">7-cyano-7-carbaguanine synthase</fullName>
    </alternativeName>
    <alternativeName>
        <fullName evidence="1">PreQ(0) synthase</fullName>
    </alternativeName>
    <alternativeName>
        <fullName evidence="1">Queuosine biosynthesis protein QueC</fullName>
    </alternativeName>
</protein>
<keyword id="KW-0067">ATP-binding</keyword>
<keyword id="KW-0436">Ligase</keyword>
<keyword id="KW-0479">Metal-binding</keyword>
<keyword id="KW-0547">Nucleotide-binding</keyword>
<keyword id="KW-0671">Queuosine biosynthesis</keyword>
<keyword id="KW-0862">Zinc</keyword>
<comment type="function">
    <text evidence="1">Catalyzes the ATP-dependent conversion of 7-carboxy-7-deazaguanine (CDG) to 7-cyano-7-deazaguanine (preQ(0)).</text>
</comment>
<comment type="catalytic activity">
    <reaction evidence="1">
        <text>7-carboxy-7-deazaguanine + NH4(+) + ATP = 7-cyano-7-deazaguanine + ADP + phosphate + H2O + H(+)</text>
        <dbReference type="Rhea" id="RHEA:27982"/>
        <dbReference type="ChEBI" id="CHEBI:15377"/>
        <dbReference type="ChEBI" id="CHEBI:15378"/>
        <dbReference type="ChEBI" id="CHEBI:28938"/>
        <dbReference type="ChEBI" id="CHEBI:30616"/>
        <dbReference type="ChEBI" id="CHEBI:43474"/>
        <dbReference type="ChEBI" id="CHEBI:45075"/>
        <dbReference type="ChEBI" id="CHEBI:61036"/>
        <dbReference type="ChEBI" id="CHEBI:456216"/>
        <dbReference type="EC" id="6.3.4.20"/>
    </reaction>
</comment>
<comment type="cofactor">
    <cofactor evidence="1">
        <name>Zn(2+)</name>
        <dbReference type="ChEBI" id="CHEBI:29105"/>
    </cofactor>
    <text evidence="1">Binds 1 zinc ion per subunit.</text>
</comment>
<comment type="pathway">
    <text evidence="1">Purine metabolism; 7-cyano-7-deazaguanine biosynthesis.</text>
</comment>
<comment type="similarity">
    <text evidence="1">Belongs to the QueC family.</text>
</comment>
<reference key="1">
    <citation type="journal article" date="2005" name="J. Bacteriol.">
        <title>Genomic sequence of an otitis media isolate of nontypeable Haemophilus influenzae: comparative study with H. influenzae serotype d, strain KW20.</title>
        <authorList>
            <person name="Harrison A."/>
            <person name="Dyer D.W."/>
            <person name="Gillaspy A."/>
            <person name="Ray W.C."/>
            <person name="Mungur R."/>
            <person name="Carson M.B."/>
            <person name="Zhong H."/>
            <person name="Gipson J."/>
            <person name="Gipson M."/>
            <person name="Johnson L.S."/>
            <person name="Lewis L."/>
            <person name="Bakaletz L.O."/>
            <person name="Munson R.S. Jr."/>
        </authorList>
    </citation>
    <scope>NUCLEOTIDE SEQUENCE [LARGE SCALE GENOMIC DNA]</scope>
    <source>
        <strain>86-028NP</strain>
    </source>
</reference>
<proteinExistence type="inferred from homology"/>
<sequence>MNIFNPNHDRKAIVIFSGGQDSTTCLFQAIAEYGKENIEAITFQYGQRHAIELEKARAIVQDLGIKQTLIDTSVMKAITHNALMDEQAHIEQKENELPNTFVDGRNALFLLYAAIYAKGQGIQDIITGVCETDFSGYPDCRDVFIKSMNVTLNLAMDYQFNIKTPLMYLTKAQTWQLADELGVLDYVQKHTHTCYEGIEGGCGKCPSCILRNKGLKKYLTQKGRKNV</sequence>
<feature type="chain" id="PRO_0000246850" description="7-cyano-7-deazaguanine synthase">
    <location>
        <begin position="1"/>
        <end position="227"/>
    </location>
</feature>
<feature type="binding site" evidence="1">
    <location>
        <begin position="16"/>
        <end position="26"/>
    </location>
    <ligand>
        <name>ATP</name>
        <dbReference type="ChEBI" id="CHEBI:30616"/>
    </ligand>
</feature>
<feature type="binding site" evidence="1">
    <location>
        <position position="194"/>
    </location>
    <ligand>
        <name>Zn(2+)</name>
        <dbReference type="ChEBI" id="CHEBI:29105"/>
    </ligand>
</feature>
<feature type="binding site" evidence="1">
    <location>
        <position position="202"/>
    </location>
    <ligand>
        <name>Zn(2+)</name>
        <dbReference type="ChEBI" id="CHEBI:29105"/>
    </ligand>
</feature>
<feature type="binding site" evidence="1">
    <location>
        <position position="205"/>
    </location>
    <ligand>
        <name>Zn(2+)</name>
        <dbReference type="ChEBI" id="CHEBI:29105"/>
    </ligand>
</feature>
<feature type="binding site" evidence="1">
    <location>
        <position position="208"/>
    </location>
    <ligand>
        <name>Zn(2+)</name>
        <dbReference type="ChEBI" id="CHEBI:29105"/>
    </ligand>
</feature>
<accession>Q4QLA8</accession>